<organism>
    <name type="scientific">Enterococcus faecalis (strain ATCC 700802 / V583)</name>
    <dbReference type="NCBI Taxonomy" id="226185"/>
    <lineage>
        <taxon>Bacteria</taxon>
        <taxon>Bacillati</taxon>
        <taxon>Bacillota</taxon>
        <taxon>Bacilli</taxon>
        <taxon>Lactobacillales</taxon>
        <taxon>Enterococcaceae</taxon>
        <taxon>Enterococcus</taxon>
    </lineage>
</organism>
<dbReference type="EC" id="5.4.2.7" evidence="1"/>
<dbReference type="EMBL" id="AE016830">
    <property type="protein sequence ID" value="AAO80057.1"/>
    <property type="molecule type" value="Genomic_DNA"/>
</dbReference>
<dbReference type="RefSeq" id="NP_813986.1">
    <property type="nucleotide sequence ID" value="NC_004668.1"/>
</dbReference>
<dbReference type="RefSeq" id="WP_002387505.1">
    <property type="nucleotide sequence ID" value="NZ_KE136524.1"/>
</dbReference>
<dbReference type="SMR" id="Q839I2"/>
<dbReference type="STRING" id="226185.EF_0185"/>
<dbReference type="EnsemblBacteria" id="AAO80057">
    <property type="protein sequence ID" value="AAO80057"/>
    <property type="gene ID" value="EF_0185"/>
</dbReference>
<dbReference type="KEGG" id="efa:EF0185"/>
<dbReference type="PATRIC" id="fig|226185.45.peg.79"/>
<dbReference type="eggNOG" id="COG1015">
    <property type="taxonomic scope" value="Bacteria"/>
</dbReference>
<dbReference type="HOGENOM" id="CLU_053861_0_0_9"/>
<dbReference type="UniPathway" id="UPA00002">
    <property type="reaction ID" value="UER00467"/>
</dbReference>
<dbReference type="Proteomes" id="UP000001415">
    <property type="component" value="Chromosome"/>
</dbReference>
<dbReference type="GO" id="GO:0005829">
    <property type="term" value="C:cytosol"/>
    <property type="evidence" value="ECO:0007669"/>
    <property type="project" value="TreeGrafter"/>
</dbReference>
<dbReference type="GO" id="GO:0000287">
    <property type="term" value="F:magnesium ion binding"/>
    <property type="evidence" value="ECO:0007669"/>
    <property type="project" value="InterPro"/>
</dbReference>
<dbReference type="GO" id="GO:0030145">
    <property type="term" value="F:manganese ion binding"/>
    <property type="evidence" value="ECO:0007669"/>
    <property type="project" value="UniProtKB-UniRule"/>
</dbReference>
<dbReference type="GO" id="GO:0008973">
    <property type="term" value="F:phosphopentomutase activity"/>
    <property type="evidence" value="ECO:0007669"/>
    <property type="project" value="UniProtKB-UniRule"/>
</dbReference>
<dbReference type="GO" id="GO:0006018">
    <property type="term" value="P:2-deoxyribose 1-phosphate catabolic process"/>
    <property type="evidence" value="ECO:0007669"/>
    <property type="project" value="UniProtKB-UniRule"/>
</dbReference>
<dbReference type="GO" id="GO:0006015">
    <property type="term" value="P:5-phosphoribose 1-diphosphate biosynthetic process"/>
    <property type="evidence" value="ECO:0007669"/>
    <property type="project" value="UniProtKB-UniPathway"/>
</dbReference>
<dbReference type="GO" id="GO:0043094">
    <property type="term" value="P:metabolic compound salvage"/>
    <property type="evidence" value="ECO:0007669"/>
    <property type="project" value="InterPro"/>
</dbReference>
<dbReference type="GO" id="GO:0009117">
    <property type="term" value="P:nucleotide metabolic process"/>
    <property type="evidence" value="ECO:0007669"/>
    <property type="project" value="InterPro"/>
</dbReference>
<dbReference type="CDD" id="cd16009">
    <property type="entry name" value="PPM"/>
    <property type="match status" value="1"/>
</dbReference>
<dbReference type="FunFam" id="3.30.70.1250:FF:000001">
    <property type="entry name" value="Phosphopentomutase"/>
    <property type="match status" value="1"/>
</dbReference>
<dbReference type="Gene3D" id="3.40.720.10">
    <property type="entry name" value="Alkaline Phosphatase, subunit A"/>
    <property type="match status" value="1"/>
</dbReference>
<dbReference type="Gene3D" id="3.30.70.1250">
    <property type="entry name" value="Phosphopentomutase"/>
    <property type="match status" value="1"/>
</dbReference>
<dbReference type="HAMAP" id="MF_00740">
    <property type="entry name" value="Phosphopentomut"/>
    <property type="match status" value="1"/>
</dbReference>
<dbReference type="InterPro" id="IPR017850">
    <property type="entry name" value="Alkaline_phosphatase_core_sf"/>
</dbReference>
<dbReference type="InterPro" id="IPR010045">
    <property type="entry name" value="DeoB"/>
</dbReference>
<dbReference type="InterPro" id="IPR006124">
    <property type="entry name" value="Metalloenzyme"/>
</dbReference>
<dbReference type="InterPro" id="IPR024052">
    <property type="entry name" value="Phosphopentomutase_DeoB_cap_sf"/>
</dbReference>
<dbReference type="NCBIfam" id="TIGR01696">
    <property type="entry name" value="deoB"/>
    <property type="match status" value="1"/>
</dbReference>
<dbReference type="NCBIfam" id="NF003766">
    <property type="entry name" value="PRK05362.1"/>
    <property type="match status" value="1"/>
</dbReference>
<dbReference type="PANTHER" id="PTHR21110">
    <property type="entry name" value="PHOSPHOPENTOMUTASE"/>
    <property type="match status" value="1"/>
</dbReference>
<dbReference type="PANTHER" id="PTHR21110:SF0">
    <property type="entry name" value="PHOSPHOPENTOMUTASE"/>
    <property type="match status" value="1"/>
</dbReference>
<dbReference type="Pfam" id="PF01676">
    <property type="entry name" value="Metalloenzyme"/>
    <property type="match status" value="1"/>
</dbReference>
<dbReference type="PIRSF" id="PIRSF001491">
    <property type="entry name" value="Ppentomutase"/>
    <property type="match status" value="1"/>
</dbReference>
<dbReference type="SUPFAM" id="SSF53649">
    <property type="entry name" value="Alkaline phosphatase-like"/>
    <property type="match status" value="1"/>
</dbReference>
<dbReference type="SUPFAM" id="SSF143856">
    <property type="entry name" value="DeoB insert domain-like"/>
    <property type="match status" value="1"/>
</dbReference>
<protein>
    <recommendedName>
        <fullName evidence="1">Phosphopentomutase</fullName>
        <ecNumber evidence="1">5.4.2.7</ecNumber>
    </recommendedName>
    <alternativeName>
        <fullName evidence="1">Phosphodeoxyribomutase</fullName>
    </alternativeName>
</protein>
<evidence type="ECO:0000255" key="1">
    <source>
        <dbReference type="HAMAP-Rule" id="MF_00740"/>
    </source>
</evidence>
<keyword id="KW-0963">Cytoplasm</keyword>
<keyword id="KW-0413">Isomerase</keyword>
<keyword id="KW-0464">Manganese</keyword>
<keyword id="KW-0479">Metal-binding</keyword>
<keyword id="KW-1185">Reference proteome</keyword>
<feature type="chain" id="PRO_0000199822" description="Phosphopentomutase">
    <location>
        <begin position="1"/>
        <end position="388"/>
    </location>
</feature>
<feature type="binding site" evidence="1">
    <location>
        <position position="11"/>
    </location>
    <ligand>
        <name>Mn(2+)</name>
        <dbReference type="ChEBI" id="CHEBI:29035"/>
        <label>1</label>
    </ligand>
</feature>
<feature type="binding site" evidence="1">
    <location>
        <position position="283"/>
    </location>
    <ligand>
        <name>Mn(2+)</name>
        <dbReference type="ChEBI" id="CHEBI:29035"/>
        <label>2</label>
    </ligand>
</feature>
<feature type="binding site" evidence="1">
    <location>
        <position position="288"/>
    </location>
    <ligand>
        <name>Mn(2+)</name>
        <dbReference type="ChEBI" id="CHEBI:29035"/>
        <label>2</label>
    </ligand>
</feature>
<feature type="binding site" evidence="1">
    <location>
        <position position="324"/>
    </location>
    <ligand>
        <name>Mn(2+)</name>
        <dbReference type="ChEBI" id="CHEBI:29035"/>
        <label>1</label>
    </ligand>
</feature>
<feature type="binding site" evidence="1">
    <location>
        <position position="325"/>
    </location>
    <ligand>
        <name>Mn(2+)</name>
        <dbReference type="ChEBI" id="CHEBI:29035"/>
        <label>1</label>
    </ligand>
</feature>
<feature type="binding site" evidence="1">
    <location>
        <position position="336"/>
    </location>
    <ligand>
        <name>Mn(2+)</name>
        <dbReference type="ChEBI" id="CHEBI:29035"/>
        <label>2</label>
    </ligand>
</feature>
<name>DEOB_ENTFA</name>
<gene>
    <name evidence="1" type="primary">deoB</name>
    <name type="ordered locus">EF_0185</name>
</gene>
<proteinExistence type="inferred from homology"/>
<sequence>MFKRVHLIVLDSVGIGEAPDAEKFGDVGSDTLGHIAKEAGLTIPHLEKLGLGTIAPLTGVKAVADHDGYATKLEEISVGKDTMTGHWEIMGLNIKKPFRVFPNGFPEELLKQIEDFSGRKVVCNKPYSGTAVIDDYGEHQMKTGDLIVYTSADPVLQIAAHEDIIPLEELYKICQYVRDITKDEPYMIGRIIARPYVGEPGNFTRTSNRHDYALDPFGHTVLDSLKENGNDVIAVGKINDIFNGQGITEAIRTKSNMDGVDQLLTVMNKEFTGLSFTNLVDFDALYGHRRDVKGYAKAIEDFDGRLPEIMAAMAEDDLLLITADHGNDPTFPGTDHTREYVPLLAYSKKMTKQGSLPQGFYSDISATIAENFEVPATENGQSFLNQLQ</sequence>
<accession>Q839I2</accession>
<reference key="1">
    <citation type="journal article" date="2003" name="Science">
        <title>Role of mobile DNA in the evolution of vancomycin-resistant Enterococcus faecalis.</title>
        <authorList>
            <person name="Paulsen I.T."/>
            <person name="Banerjei L."/>
            <person name="Myers G.S.A."/>
            <person name="Nelson K.E."/>
            <person name="Seshadri R."/>
            <person name="Read T.D."/>
            <person name="Fouts D.E."/>
            <person name="Eisen J.A."/>
            <person name="Gill S.R."/>
            <person name="Heidelberg J.F."/>
            <person name="Tettelin H."/>
            <person name="Dodson R.J."/>
            <person name="Umayam L.A."/>
            <person name="Brinkac L.M."/>
            <person name="Beanan M.J."/>
            <person name="Daugherty S.C."/>
            <person name="DeBoy R.T."/>
            <person name="Durkin S.A."/>
            <person name="Kolonay J.F."/>
            <person name="Madupu R."/>
            <person name="Nelson W.C."/>
            <person name="Vamathevan J.J."/>
            <person name="Tran B."/>
            <person name="Upton J."/>
            <person name="Hansen T."/>
            <person name="Shetty J."/>
            <person name="Khouri H.M."/>
            <person name="Utterback T.R."/>
            <person name="Radune D."/>
            <person name="Ketchum K.A."/>
            <person name="Dougherty B.A."/>
            <person name="Fraser C.M."/>
        </authorList>
    </citation>
    <scope>NUCLEOTIDE SEQUENCE [LARGE SCALE GENOMIC DNA]</scope>
    <source>
        <strain>ATCC 700802 / V583</strain>
    </source>
</reference>
<comment type="function">
    <text evidence="1">Isomerase that catalyzes the conversion of deoxy-ribose 1-phosphate (dRib-1-P) and ribose 1-phosphate (Rib-1-P) to deoxy-ribose 5-phosphate (dRib-5-P) and ribose 5-phosphate (Rib-5-P), respectively.</text>
</comment>
<comment type="catalytic activity">
    <reaction evidence="1">
        <text>2-deoxy-alpha-D-ribose 1-phosphate = 2-deoxy-D-ribose 5-phosphate</text>
        <dbReference type="Rhea" id="RHEA:27658"/>
        <dbReference type="ChEBI" id="CHEBI:57259"/>
        <dbReference type="ChEBI" id="CHEBI:62877"/>
        <dbReference type="EC" id="5.4.2.7"/>
    </reaction>
</comment>
<comment type="catalytic activity">
    <reaction evidence="1">
        <text>alpha-D-ribose 1-phosphate = D-ribose 5-phosphate</text>
        <dbReference type="Rhea" id="RHEA:18793"/>
        <dbReference type="ChEBI" id="CHEBI:57720"/>
        <dbReference type="ChEBI" id="CHEBI:78346"/>
        <dbReference type="EC" id="5.4.2.7"/>
    </reaction>
</comment>
<comment type="cofactor">
    <cofactor evidence="1">
        <name>Mn(2+)</name>
        <dbReference type="ChEBI" id="CHEBI:29035"/>
    </cofactor>
    <text evidence="1">Binds 2 manganese ions.</text>
</comment>
<comment type="pathway">
    <text evidence="1">Carbohydrate degradation; 2-deoxy-D-ribose 1-phosphate degradation; D-glyceraldehyde 3-phosphate and acetaldehyde from 2-deoxy-alpha-D-ribose 1-phosphate: step 1/2.</text>
</comment>
<comment type="subcellular location">
    <subcellularLocation>
        <location evidence="1">Cytoplasm</location>
    </subcellularLocation>
</comment>
<comment type="similarity">
    <text evidence="1">Belongs to the phosphopentomutase family.</text>
</comment>